<gene>
    <name type="primary">cmaC</name>
    <name type="synonym">mmaA2</name>
    <name type="synonym">mmas-2</name>
    <name type="ordered locus">BQ2027_MB0663C</name>
</gene>
<dbReference type="EC" id="2.1.1.79"/>
<dbReference type="EMBL" id="U77466">
    <property type="protein sequence ID" value="AAC44874.1"/>
    <property type="molecule type" value="Genomic_DNA"/>
</dbReference>
<dbReference type="EMBL" id="LT708304">
    <property type="protein sequence ID" value="SIT99261.1"/>
    <property type="molecule type" value="Genomic_DNA"/>
</dbReference>
<dbReference type="RefSeq" id="NP_854321.1">
    <property type="nucleotide sequence ID" value="NC_002945.3"/>
</dbReference>
<dbReference type="RefSeq" id="WP_003403304.1">
    <property type="nucleotide sequence ID" value="NC_002945.4"/>
</dbReference>
<dbReference type="SMR" id="Q7U1J9"/>
<dbReference type="KEGG" id="mbo:BQ2027_MB0663C"/>
<dbReference type="PATRIC" id="fig|233413.5.peg.723"/>
<dbReference type="UniPathway" id="UPA00915"/>
<dbReference type="Proteomes" id="UP000001419">
    <property type="component" value="Chromosome"/>
</dbReference>
<dbReference type="GO" id="GO:0008825">
    <property type="term" value="F:cyclopropane-fatty-acyl-phospholipid synthase activity"/>
    <property type="evidence" value="ECO:0007669"/>
    <property type="project" value="UniProtKB-EC"/>
</dbReference>
<dbReference type="GO" id="GO:0008168">
    <property type="term" value="F:methyltransferase activity"/>
    <property type="evidence" value="ECO:0000315"/>
    <property type="project" value="UniProtKB"/>
</dbReference>
<dbReference type="GO" id="GO:0032259">
    <property type="term" value="P:methylation"/>
    <property type="evidence" value="ECO:0007669"/>
    <property type="project" value="UniProtKB-KW"/>
</dbReference>
<dbReference type="GO" id="GO:0071768">
    <property type="term" value="P:mycolic acid biosynthetic process"/>
    <property type="evidence" value="ECO:0000315"/>
    <property type="project" value="UniProtKB"/>
</dbReference>
<dbReference type="CDD" id="cd02440">
    <property type="entry name" value="AdoMet_MTases"/>
    <property type="match status" value="1"/>
</dbReference>
<dbReference type="FunFam" id="3.40.50.150:FF:000115">
    <property type="entry name" value="Cyclopropane mycolic acid synthase 1"/>
    <property type="match status" value="1"/>
</dbReference>
<dbReference type="Gene3D" id="3.40.50.150">
    <property type="entry name" value="Vaccinia Virus protein VP39"/>
    <property type="match status" value="1"/>
</dbReference>
<dbReference type="InterPro" id="IPR050723">
    <property type="entry name" value="CFA/CMAS"/>
</dbReference>
<dbReference type="InterPro" id="IPR003333">
    <property type="entry name" value="CMAS"/>
</dbReference>
<dbReference type="InterPro" id="IPR047672">
    <property type="entry name" value="CMAS_actinobact"/>
</dbReference>
<dbReference type="InterPro" id="IPR029063">
    <property type="entry name" value="SAM-dependent_MTases_sf"/>
</dbReference>
<dbReference type="NCBIfam" id="NF040660">
    <property type="entry name" value="mycolic_MTase"/>
    <property type="match status" value="1"/>
</dbReference>
<dbReference type="PANTHER" id="PTHR43667">
    <property type="entry name" value="CYCLOPROPANE-FATTY-ACYL-PHOSPHOLIPID SYNTHASE"/>
    <property type="match status" value="1"/>
</dbReference>
<dbReference type="PANTHER" id="PTHR43667:SF1">
    <property type="entry name" value="CYCLOPROPANE-FATTY-ACYL-PHOSPHOLIPID SYNTHASE"/>
    <property type="match status" value="1"/>
</dbReference>
<dbReference type="Pfam" id="PF02353">
    <property type="entry name" value="CMAS"/>
    <property type="match status" value="1"/>
</dbReference>
<dbReference type="PIRSF" id="PIRSF003085">
    <property type="entry name" value="CMAS"/>
    <property type="match status" value="1"/>
</dbReference>
<dbReference type="SUPFAM" id="SSF53335">
    <property type="entry name" value="S-adenosyl-L-methionine-dependent methyltransferases"/>
    <property type="match status" value="1"/>
</dbReference>
<organism>
    <name type="scientific">Mycobacterium bovis (strain ATCC BAA-935 / AF2122/97)</name>
    <dbReference type="NCBI Taxonomy" id="233413"/>
    <lineage>
        <taxon>Bacteria</taxon>
        <taxon>Bacillati</taxon>
        <taxon>Actinomycetota</taxon>
        <taxon>Actinomycetes</taxon>
        <taxon>Mycobacteriales</taxon>
        <taxon>Mycobacteriaceae</taxon>
        <taxon>Mycobacterium</taxon>
        <taxon>Mycobacterium tuberculosis complex</taxon>
    </lineage>
</organism>
<name>MMAA2_MYCBO</name>
<reference key="1">
    <citation type="journal article" date="1997" name="Mol. Microbiol.">
        <title>Mycobacterium bovis BCG genes involved in the biosynthesis of cyclopropyl keto- and hydroxy-mycolic acids.</title>
        <authorList>
            <person name="Dubnau E."/>
            <person name="Laneelle M.-A."/>
            <person name="Soares S."/>
            <person name="Benichou A."/>
            <person name="Vaz T."/>
            <person name="Prome D."/>
            <person name="Prome J.-C."/>
            <person name="Daffe M."/>
            <person name="Quemard A."/>
        </authorList>
    </citation>
    <scope>NUCLEOTIDE SEQUENCE [GENOMIC DNA]</scope>
    <scope>FUNCTION IN OXYGEN-CONTAINING MYCOLATES BIOSYNTHESIS</scope>
    <scope>NOMENCLATURE</scope>
    <source>
        <strain>BCG / Pasteur</strain>
    </source>
</reference>
<reference key="2">
    <citation type="journal article" date="2003" name="Proc. Natl. Acad. Sci. U.S.A.">
        <title>The complete genome sequence of Mycobacterium bovis.</title>
        <authorList>
            <person name="Garnier T."/>
            <person name="Eiglmeier K."/>
            <person name="Camus J.-C."/>
            <person name="Medina N."/>
            <person name="Mansoor H."/>
            <person name="Pryor M."/>
            <person name="Duthoy S."/>
            <person name="Grondin S."/>
            <person name="Lacroix C."/>
            <person name="Monsempe C."/>
            <person name="Simon S."/>
            <person name="Harris B."/>
            <person name="Atkin R."/>
            <person name="Doggett J."/>
            <person name="Mayes R."/>
            <person name="Keating L."/>
            <person name="Wheeler P.R."/>
            <person name="Parkhill J."/>
            <person name="Barrell B.G."/>
            <person name="Cole S.T."/>
            <person name="Gordon S.V."/>
            <person name="Hewinson R.G."/>
        </authorList>
    </citation>
    <scope>NUCLEOTIDE SEQUENCE [LARGE SCALE GENOMIC DNA]</scope>
    <source>
        <strain>ATCC BAA-935 / AF2122/97</strain>
    </source>
</reference>
<reference key="3">
    <citation type="journal article" date="2017" name="Genome Announc.">
        <title>Updated reference genome sequence and annotation of Mycobacterium bovis AF2122/97.</title>
        <authorList>
            <person name="Malone K.M."/>
            <person name="Farrell D."/>
            <person name="Stuber T.P."/>
            <person name="Schubert O.T."/>
            <person name="Aebersold R."/>
            <person name="Robbe-Austerman S."/>
            <person name="Gordon S.V."/>
        </authorList>
    </citation>
    <scope>NUCLEOTIDE SEQUENCE [LARGE SCALE GENOMIC DNA]</scope>
    <scope>GENOME REANNOTATION</scope>
    <source>
        <strain>ATCC BAA-935 / AF2122/97</strain>
    </source>
</reference>
<feature type="chain" id="PRO_0000398360" description="Cyclopropane mycolic acid synthase MmaA2">
    <location>
        <begin position="1"/>
        <end position="287"/>
    </location>
</feature>
<feature type="active site" evidence="1">
    <location>
        <position position="269"/>
    </location>
</feature>
<feature type="binding site" evidence="1">
    <location>
        <begin position="33"/>
        <end position="34"/>
    </location>
    <ligand>
        <name>S-adenosyl-L-methionine</name>
        <dbReference type="ChEBI" id="CHEBI:59789"/>
    </ligand>
</feature>
<feature type="binding site" evidence="1">
    <location>
        <begin position="72"/>
        <end position="74"/>
    </location>
    <ligand>
        <name>S-adenosyl-L-methionine</name>
        <dbReference type="ChEBI" id="CHEBI:59789"/>
    </ligand>
</feature>
<feature type="binding site" evidence="1">
    <location>
        <begin position="94"/>
        <end position="99"/>
    </location>
    <ligand>
        <name>S-adenosyl-L-methionine</name>
        <dbReference type="ChEBI" id="CHEBI:59789"/>
    </ligand>
</feature>
<feature type="binding site" evidence="1">
    <location>
        <begin position="123"/>
        <end position="124"/>
    </location>
    <ligand>
        <name>S-adenosyl-L-methionine</name>
        <dbReference type="ChEBI" id="CHEBI:59789"/>
    </ligand>
</feature>
<feature type="binding site" evidence="1">
    <location>
        <position position="136"/>
    </location>
    <ligand>
        <name>S-adenosyl-L-methionine</name>
        <dbReference type="ChEBI" id="CHEBI:59789"/>
    </ligand>
</feature>
<feature type="sequence conflict" description="In Ref. 1; AAC44874." evidence="3" ref="1">
    <original>I</original>
    <variation>S</variation>
    <location>
        <position position="208"/>
    </location>
</feature>
<keyword id="KW-0444">Lipid biosynthesis</keyword>
<keyword id="KW-0443">Lipid metabolism</keyword>
<keyword id="KW-0489">Methyltransferase</keyword>
<keyword id="KW-1185">Reference proteome</keyword>
<keyword id="KW-0949">S-adenosyl-L-methionine</keyword>
<keyword id="KW-0808">Transferase</keyword>
<sequence>MVNDLTPHFEDVQAHYDLSDDFFRLFLDPTQTYSCAHFEREDMTLEEAQIAKIDLALGKLGLQPGMTLLDIGCGWGATMRRAIAQYDVNVVGLTLSKNQAAHVQKSFDEMDTPLDRRVLLAGWEQFNEPVDRIVSIGAFEHFGHDRHADFFARAHKILPPDGVLLLHTITGLTRQQMVDHGLPLTLWLARFLKFIATEIFPGGQPPTIEMVEEQSAKTGFTLTRRQSLQPHYARTLDLWAEALQEHKSEAIAIQSEEVYERYMKYLTGCAKLFRVGYIDVNQFTLAK</sequence>
<accession>Q7U1J9</accession>
<accession>A0A1R3XVZ3</accession>
<accession>P94923</accession>
<accession>X2BFN6</accession>
<evidence type="ECO:0000250" key="1"/>
<evidence type="ECO:0000269" key="2">
    <source>
    </source>
</evidence>
<evidence type="ECO:0000305" key="3"/>
<comment type="function">
    <text evidence="1 2">Catalyzes the conversion of a double bond to a cis cyclopropane ring at the distal position of an alpha mycolic acid via the transfer of a methylene group from S-adenosyl-L-methionine. MmaA2 also catalyzes the biosynthesis of the cis-cyclopropanated methoxymycolates. Cyclopropanated mycolic acids are key factors participating in cell envelope permeability, host immunomodulation and persistence (By similarity).</text>
</comment>
<comment type="catalytic activity">
    <reaction>
        <text>a 1-acyl-2-(9Z)-enoyl-sn-glycero-3-phospholipid + S-adenosyl-L-methionine = a 1-acyl-2-(9-cyclopronane)-acyl-sn-glycero-3-phospholipid + S-adenosyl-L-homocysteine + H(+)</text>
        <dbReference type="Rhea" id="RHEA:11988"/>
        <dbReference type="ChEBI" id="CHEBI:15378"/>
        <dbReference type="ChEBI" id="CHEBI:57856"/>
        <dbReference type="ChEBI" id="CHEBI:59789"/>
        <dbReference type="ChEBI" id="CHEBI:76593"/>
        <dbReference type="ChEBI" id="CHEBI:76594"/>
        <dbReference type="EC" id="2.1.1.79"/>
    </reaction>
</comment>
<comment type="pathway">
    <text>Lipid metabolism; mycolic acid biosynthesis.</text>
</comment>
<comment type="similarity">
    <text evidence="3">Belongs to the CFA/CMAS family.</text>
</comment>
<proteinExistence type="evidence at protein level"/>
<protein>
    <recommendedName>
        <fullName>Cyclopropane mycolic acid synthase MmaA2</fullName>
        <shortName>CMAS</shortName>
        <ecNumber>2.1.1.79</ecNumber>
    </recommendedName>
    <alternativeName>
        <fullName>Cyclopropane-fatty-acyl-phospholipid synthase</fullName>
        <shortName>CFA synthase</shortName>
    </alternativeName>
    <alternativeName>
        <fullName>Mycolic acid methyltransferase</fullName>
        <shortName>MA-MT</shortName>
    </alternativeName>
    <alternativeName>
        <fullName>S-adenosylmethionine-dependent methyltransferase</fullName>
        <shortName>AdoMet-MT</shortName>
        <shortName>SAM-MT</shortName>
    </alternativeName>
</protein>